<accession>P77091</accession>
<accession>Q9R7T7</accession>
<name>HOKE_ECOLI</name>
<reference key="1">
    <citation type="journal article" date="1996" name="DNA Res.">
        <title>A 718-kb DNA sequence of the Escherichia coli K-12 genome corresponding to the 12.7-28.0 min region on the linkage map.</title>
        <authorList>
            <person name="Oshima T."/>
            <person name="Aiba H."/>
            <person name="Baba T."/>
            <person name="Fujita K."/>
            <person name="Hayashi K."/>
            <person name="Honjo A."/>
            <person name="Ikemoto K."/>
            <person name="Inada T."/>
            <person name="Itoh T."/>
            <person name="Kajihara M."/>
            <person name="Kanai K."/>
            <person name="Kashimoto K."/>
            <person name="Kimura S."/>
            <person name="Kitagawa M."/>
            <person name="Makino K."/>
            <person name="Masuda S."/>
            <person name="Miki T."/>
            <person name="Mizobuchi K."/>
            <person name="Mori H."/>
            <person name="Motomura K."/>
            <person name="Nakamura Y."/>
            <person name="Nashimoto H."/>
            <person name="Nishio Y."/>
            <person name="Saito N."/>
            <person name="Sampei G."/>
            <person name="Seki Y."/>
            <person name="Tagami H."/>
            <person name="Takemoto K."/>
            <person name="Wada C."/>
            <person name="Yamamoto Y."/>
            <person name="Yano M."/>
            <person name="Horiuchi T."/>
        </authorList>
    </citation>
    <scope>NUCLEOTIDE SEQUENCE [LARGE SCALE GENOMIC DNA]</scope>
    <source>
        <strain>K12 / W3110 / ATCC 27325 / DSM 5911</strain>
    </source>
</reference>
<reference key="2">
    <citation type="submission" date="1997-01" db="EMBL/GenBank/DDBJ databases">
        <title>Sequence of minutes 4-25 of Escherichia coli.</title>
        <authorList>
            <person name="Chung E."/>
            <person name="Allen E."/>
            <person name="Araujo R."/>
            <person name="Aparicio A.M."/>
            <person name="Davis K."/>
            <person name="Duncan M."/>
            <person name="Federspiel N."/>
            <person name="Hyman R."/>
            <person name="Kalman S."/>
            <person name="Komp C."/>
            <person name="Kurdi O."/>
            <person name="Lew H."/>
            <person name="Lin D."/>
            <person name="Namath A."/>
            <person name="Oefner P."/>
            <person name="Roberts D."/>
            <person name="Schramm S."/>
            <person name="Davis R.W."/>
        </authorList>
    </citation>
    <scope>NUCLEOTIDE SEQUENCE [LARGE SCALE GENOMIC DNA]</scope>
    <source>
        <strain>K12 / MG1655 / ATCC 47076</strain>
    </source>
</reference>
<reference key="3">
    <citation type="journal article" date="1997" name="Science">
        <title>The complete genome sequence of Escherichia coli K-12.</title>
        <authorList>
            <person name="Blattner F.R."/>
            <person name="Plunkett G. III"/>
            <person name="Bloch C.A."/>
            <person name="Perna N.T."/>
            <person name="Burland V."/>
            <person name="Riley M."/>
            <person name="Collado-Vides J."/>
            <person name="Glasner J.D."/>
            <person name="Rode C.K."/>
            <person name="Mayhew G.F."/>
            <person name="Gregor J."/>
            <person name="Davis N.W."/>
            <person name="Kirkpatrick H.A."/>
            <person name="Goeden M.A."/>
            <person name="Rose D.J."/>
            <person name="Mau B."/>
            <person name="Shao Y."/>
        </authorList>
    </citation>
    <scope>NUCLEOTIDE SEQUENCE [LARGE SCALE GENOMIC DNA]</scope>
    <source>
        <strain>K12 / MG1655 / ATCC 47076</strain>
    </source>
</reference>
<reference key="4">
    <citation type="journal article" date="2006" name="Mol. Syst. Biol.">
        <title>Highly accurate genome sequences of Escherichia coli K-12 strains MG1655 and W3110.</title>
        <authorList>
            <person name="Hayashi K."/>
            <person name="Morooka N."/>
            <person name="Yamamoto Y."/>
            <person name="Fujita K."/>
            <person name="Isono K."/>
            <person name="Choi S."/>
            <person name="Ohtsubo E."/>
            <person name="Baba T."/>
            <person name="Wanner B.L."/>
            <person name="Mori H."/>
            <person name="Horiuchi T."/>
        </authorList>
    </citation>
    <scope>NUCLEOTIDE SEQUENCE [LARGE SCALE GENOMIC DNA]</scope>
    <source>
        <strain>K12 / W3110 / ATCC 27325 / DSM 5911</strain>
    </source>
</reference>
<reference key="5">
    <citation type="journal article" date="1999" name="Mol. Microbiol.">
        <title>Multiple hok genes on the chromosome of Escherichia coli.</title>
        <authorList>
            <person name="Pedersen K."/>
            <person name="Gerdes K."/>
        </authorList>
    </citation>
    <scope>DISCUSSION OF SEQUENCE</scope>
</reference>
<reference key="6">
    <citation type="journal article" date="2000" name="Mol. Microbiol.">
        <title>Identification of additional genes belonging to the LexA regulon in Escherichia coli.</title>
        <authorList>
            <person name="Fernandez De Henestrosa A.R."/>
            <person name="Ogi T."/>
            <person name="Aoyagi S."/>
            <person name="Chafin D."/>
            <person name="Hayes J.J."/>
            <person name="Ohmori H."/>
            <person name="Woodgate R."/>
        </authorList>
    </citation>
    <scope>REGULATION BY LEXA</scope>
    <scope>INDUCTION</scope>
    <source>
        <strain>K12 / RW118</strain>
    </source>
</reference>
<proteinExistence type="evidence at transcript level"/>
<sequence length="50" mass="5564">MLTKYALAAVIVLCLTVLGFTLLVGDSLCEFTVKERNIEFKAVLAYEPKK</sequence>
<protein>
    <recommendedName>
        <fullName>Toxic protein HokE</fullName>
    </recommendedName>
</protein>
<organism>
    <name type="scientific">Escherichia coli (strain K12)</name>
    <dbReference type="NCBI Taxonomy" id="83333"/>
    <lineage>
        <taxon>Bacteria</taxon>
        <taxon>Pseudomonadati</taxon>
        <taxon>Pseudomonadota</taxon>
        <taxon>Gammaproteobacteria</taxon>
        <taxon>Enterobacterales</taxon>
        <taxon>Enterobacteriaceae</taxon>
        <taxon>Escherichia</taxon>
    </lineage>
</organism>
<evidence type="ECO:0000250" key="1">
    <source>
        <dbReference type="UniProtKB" id="P0ACG4"/>
    </source>
</evidence>
<evidence type="ECO:0000255" key="2"/>
<evidence type="ECO:0000269" key="3">
    <source>
    </source>
</evidence>
<evidence type="ECO:0000303" key="4">
    <source>
    </source>
</evidence>
<evidence type="ECO:0000305" key="5"/>
<evidence type="ECO:0000305" key="6">
    <source>
    </source>
</evidence>
<feature type="chain" id="PRO_0000199036" description="Toxic protein HokE">
    <location>
        <begin position="1"/>
        <end position="50"/>
    </location>
</feature>
<feature type="transmembrane region" description="Helical" evidence="2">
    <location>
        <begin position="5"/>
        <end position="25"/>
    </location>
</feature>
<gene>
    <name evidence="4" type="primary">hokE</name>
    <name type="synonym">ybdY</name>
    <name type="ordered locus">b4415</name>
    <name type="ordered locus">JW5084</name>
</gene>
<comment type="function">
    <text evidence="6">Toxic component of a type I toxin-antitoxin (TA) system; if it expressed it could be neutralized by antisense antitoxin RNA SokE.</text>
</comment>
<comment type="subcellular location">
    <subcellularLocation>
        <location evidence="1">Cell inner membrane</location>
        <topology evidence="1">Single-pass membrane protein</topology>
    </subcellularLocation>
</comment>
<comment type="induction">
    <text evidence="3">Repressed by LexA, induced by DNA damage.</text>
</comment>
<comment type="miscellaneous">
    <text evidence="6">Interrupted by an IS186 element, which silences the locus in strain K12 MG1655.</text>
</comment>
<comment type="similarity">
    <text evidence="5">Belongs to the Hok/Gef family.</text>
</comment>
<comment type="sequence caution" evidence="5">
    <conflict type="erroneous initiation">
        <sequence resource="EMBL-CDS" id="AAB40780"/>
    </conflict>
    <text>Extended N-terminus.</text>
</comment>
<dbReference type="EMBL" id="U82598">
    <property type="protein sequence ID" value="AAB40780.1"/>
    <property type="status" value="ALT_INIT"/>
    <property type="molecule type" value="Genomic_DNA"/>
</dbReference>
<dbReference type="EMBL" id="U00096">
    <property type="protein sequence ID" value="AAT48125.1"/>
    <property type="molecule type" value="Genomic_DNA"/>
</dbReference>
<dbReference type="EMBL" id="AP009048">
    <property type="protein sequence ID" value="BAA35222.2"/>
    <property type="molecule type" value="Genomic_DNA"/>
</dbReference>
<dbReference type="RefSeq" id="WP_000956455.1">
    <property type="nucleotide sequence ID" value="NZ_STEB01000055.1"/>
</dbReference>
<dbReference type="RefSeq" id="YP_025295.1">
    <property type="nucleotide sequence ID" value="NC_000913.3"/>
</dbReference>
<dbReference type="SMR" id="P77091"/>
<dbReference type="BioGRID" id="4260712">
    <property type="interactions" value="218"/>
</dbReference>
<dbReference type="FunCoup" id="P77091">
    <property type="interactions" value="424"/>
</dbReference>
<dbReference type="STRING" id="511145.b4415"/>
<dbReference type="PaxDb" id="511145-b4415"/>
<dbReference type="EnsemblBacteria" id="AAT48125">
    <property type="protein sequence ID" value="AAT48125"/>
    <property type="gene ID" value="b4415"/>
</dbReference>
<dbReference type="GeneID" id="2847715"/>
<dbReference type="GeneID" id="93776906"/>
<dbReference type="KEGG" id="ecj:JW5084"/>
<dbReference type="KEGG" id="eco:b4415"/>
<dbReference type="KEGG" id="ecoc:C3026_02895"/>
<dbReference type="PATRIC" id="fig|511145.12.peg.606"/>
<dbReference type="EchoBASE" id="EB4049"/>
<dbReference type="eggNOG" id="ENOG50336J3">
    <property type="taxonomic scope" value="Bacteria"/>
</dbReference>
<dbReference type="eggNOG" id="ENOG5033FBI">
    <property type="taxonomic scope" value="Bacteria"/>
</dbReference>
<dbReference type="HOGENOM" id="CLU_177638_3_2_6"/>
<dbReference type="InParanoid" id="P77091"/>
<dbReference type="OrthoDB" id="5880683at2"/>
<dbReference type="BioCyc" id="EcoCyc:MONOMER0-1581"/>
<dbReference type="PRO" id="PR:P77091"/>
<dbReference type="Proteomes" id="UP000000625">
    <property type="component" value="Chromosome"/>
</dbReference>
<dbReference type="GO" id="GO:0005886">
    <property type="term" value="C:plasma membrane"/>
    <property type="evidence" value="ECO:0007669"/>
    <property type="project" value="UniProtKB-SubCell"/>
</dbReference>
<dbReference type="GO" id="GO:0006974">
    <property type="term" value="P:DNA damage response"/>
    <property type="evidence" value="ECO:0000270"/>
    <property type="project" value="EcoliWiki"/>
</dbReference>
<dbReference type="InterPro" id="IPR000021">
    <property type="entry name" value="Hok/gef_toxin"/>
</dbReference>
<dbReference type="InterPro" id="IPR018084">
    <property type="entry name" value="Hok/gef_toxin_CS"/>
</dbReference>
<dbReference type="Pfam" id="PF01848">
    <property type="entry name" value="HOK_GEF"/>
    <property type="match status" value="1"/>
</dbReference>
<dbReference type="PRINTS" id="PR00281">
    <property type="entry name" value="HOKGEFTOXIC"/>
</dbReference>
<dbReference type="PROSITE" id="PS00556">
    <property type="entry name" value="HOK_GEF"/>
    <property type="match status" value="1"/>
</dbReference>
<keyword id="KW-0997">Cell inner membrane</keyword>
<keyword id="KW-1003">Cell membrane</keyword>
<keyword id="KW-0472">Membrane</keyword>
<keyword id="KW-1185">Reference proteome</keyword>
<keyword id="KW-1277">Toxin-antitoxin system</keyword>
<keyword id="KW-0812">Transmembrane</keyword>
<keyword id="KW-1133">Transmembrane helix</keyword>